<dbReference type="EMBL" id="AB168279">
    <property type="protein sequence ID" value="BAE00403.1"/>
    <property type="molecule type" value="mRNA"/>
</dbReference>
<dbReference type="SMR" id="Q4R918"/>
<dbReference type="STRING" id="9541.ENSMFAP00000013251"/>
<dbReference type="eggNOG" id="KOG0239">
    <property type="taxonomic scope" value="Eukaryota"/>
</dbReference>
<dbReference type="Proteomes" id="UP000233100">
    <property type="component" value="Unplaced"/>
</dbReference>
<dbReference type="GO" id="GO:0005813">
    <property type="term" value="C:centrosome"/>
    <property type="evidence" value="ECO:0000314"/>
    <property type="project" value="UniProtKB"/>
</dbReference>
<dbReference type="GO" id="GO:0005737">
    <property type="term" value="C:cytoplasm"/>
    <property type="evidence" value="ECO:0007669"/>
    <property type="project" value="UniProtKB-KW"/>
</dbReference>
<dbReference type="GO" id="GO:0005874">
    <property type="term" value="C:microtubule"/>
    <property type="evidence" value="ECO:0007669"/>
    <property type="project" value="UniProtKB-KW"/>
</dbReference>
<dbReference type="GO" id="GO:0005524">
    <property type="term" value="F:ATP binding"/>
    <property type="evidence" value="ECO:0007669"/>
    <property type="project" value="UniProtKB-KW"/>
</dbReference>
<dbReference type="GO" id="GO:0008017">
    <property type="term" value="F:microtubule binding"/>
    <property type="evidence" value="ECO:0007669"/>
    <property type="project" value="InterPro"/>
</dbReference>
<dbReference type="GO" id="GO:0008569">
    <property type="term" value="F:minus-end-directed microtubule motor activity"/>
    <property type="evidence" value="ECO:0000314"/>
    <property type="project" value="UniProtKB"/>
</dbReference>
<dbReference type="GO" id="GO:0051294">
    <property type="term" value="P:establishment of spindle orientation"/>
    <property type="evidence" value="ECO:0000250"/>
    <property type="project" value="UniProtKB"/>
</dbReference>
<dbReference type="GO" id="GO:0007018">
    <property type="term" value="P:microtubule-based movement"/>
    <property type="evidence" value="ECO:0007669"/>
    <property type="project" value="InterPro"/>
</dbReference>
<dbReference type="GO" id="GO:0046603">
    <property type="term" value="P:negative regulation of mitotic centrosome separation"/>
    <property type="evidence" value="ECO:0000250"/>
    <property type="project" value="UniProtKB"/>
</dbReference>
<dbReference type="GO" id="GO:0051647">
    <property type="term" value="P:nucleus localization"/>
    <property type="evidence" value="ECO:0000250"/>
    <property type="project" value="UniProtKB"/>
</dbReference>
<dbReference type="GO" id="GO:0051289">
    <property type="term" value="P:protein homotetramerization"/>
    <property type="evidence" value="ECO:0000314"/>
    <property type="project" value="UniProtKB"/>
</dbReference>
<dbReference type="FunFam" id="3.40.850.10:FF:000118">
    <property type="entry name" value="Kinesin-like protein"/>
    <property type="match status" value="1"/>
</dbReference>
<dbReference type="Gene3D" id="3.40.850.10">
    <property type="entry name" value="Kinesin motor domain"/>
    <property type="match status" value="1"/>
</dbReference>
<dbReference type="InterPro" id="IPR027640">
    <property type="entry name" value="Kinesin-like_fam"/>
</dbReference>
<dbReference type="InterPro" id="IPR019821">
    <property type="entry name" value="Kinesin_motor_CS"/>
</dbReference>
<dbReference type="InterPro" id="IPR001752">
    <property type="entry name" value="Kinesin_motor_dom"/>
</dbReference>
<dbReference type="InterPro" id="IPR036961">
    <property type="entry name" value="Kinesin_motor_dom_sf"/>
</dbReference>
<dbReference type="InterPro" id="IPR027417">
    <property type="entry name" value="P-loop_NTPase"/>
</dbReference>
<dbReference type="PANTHER" id="PTHR47972:SF63">
    <property type="entry name" value="KINESIN FAMILY MEMBER 25"/>
    <property type="match status" value="1"/>
</dbReference>
<dbReference type="PANTHER" id="PTHR47972">
    <property type="entry name" value="KINESIN-LIKE PROTEIN KLP-3"/>
    <property type="match status" value="1"/>
</dbReference>
<dbReference type="Pfam" id="PF00225">
    <property type="entry name" value="Kinesin"/>
    <property type="match status" value="1"/>
</dbReference>
<dbReference type="PRINTS" id="PR00380">
    <property type="entry name" value="KINESINHEAVY"/>
</dbReference>
<dbReference type="SMART" id="SM00129">
    <property type="entry name" value="KISc"/>
    <property type="match status" value="1"/>
</dbReference>
<dbReference type="SUPFAM" id="SSF52540">
    <property type="entry name" value="P-loop containing nucleoside triphosphate hydrolases"/>
    <property type="match status" value="1"/>
</dbReference>
<dbReference type="PROSITE" id="PS00411">
    <property type="entry name" value="KINESIN_MOTOR_1"/>
    <property type="match status" value="1"/>
</dbReference>
<dbReference type="PROSITE" id="PS50067">
    <property type="entry name" value="KINESIN_MOTOR_2"/>
    <property type="match status" value="1"/>
</dbReference>
<organism>
    <name type="scientific">Macaca fascicularis</name>
    <name type="common">Crab-eating macaque</name>
    <name type="synonym">Cynomolgus monkey</name>
    <dbReference type="NCBI Taxonomy" id="9541"/>
    <lineage>
        <taxon>Eukaryota</taxon>
        <taxon>Metazoa</taxon>
        <taxon>Chordata</taxon>
        <taxon>Craniata</taxon>
        <taxon>Vertebrata</taxon>
        <taxon>Euteleostomi</taxon>
        <taxon>Mammalia</taxon>
        <taxon>Eutheria</taxon>
        <taxon>Euarchontoglires</taxon>
        <taxon>Primates</taxon>
        <taxon>Haplorrhini</taxon>
        <taxon>Catarrhini</taxon>
        <taxon>Cercopithecidae</taxon>
        <taxon>Cercopithecinae</taxon>
        <taxon>Macaca</taxon>
    </lineage>
</organism>
<name>KIF25_MACFA</name>
<keyword id="KW-0067">ATP-binding</keyword>
<keyword id="KW-0175">Coiled coil</keyword>
<keyword id="KW-0963">Cytoplasm</keyword>
<keyword id="KW-0206">Cytoskeleton</keyword>
<keyword id="KW-0493">Microtubule</keyword>
<keyword id="KW-0505">Motor protein</keyword>
<keyword id="KW-0547">Nucleotide-binding</keyword>
<keyword id="KW-1185">Reference proteome</keyword>
<evidence type="ECO:0000250" key="1">
    <source>
        <dbReference type="UniProtKB" id="Q9UIL4"/>
    </source>
</evidence>
<evidence type="ECO:0000255" key="2"/>
<evidence type="ECO:0000255" key="3">
    <source>
        <dbReference type="PROSITE-ProRule" id="PRU00283"/>
    </source>
</evidence>
<evidence type="ECO:0000256" key="4">
    <source>
        <dbReference type="SAM" id="MobiDB-lite"/>
    </source>
</evidence>
<evidence type="ECO:0000269" key="5">
    <source>
    </source>
</evidence>
<evidence type="ECO:0000303" key="6">
    <source>
    </source>
</evidence>
<evidence type="ECO:0000305" key="7"/>
<proteinExistence type="evidence at protein level"/>
<gene>
    <name evidence="1" type="primary">KIF25</name>
    <name evidence="6" type="ORF">QtsA-10923</name>
</gene>
<accession>Q4R918</accession>
<sequence>MPAGGGRWGSFWEQRTRQLQSQVRAKEDKIAELETENAVLLLKLAEYKGKIEKSRSEATRISTLYNKQQRLQRNTRSALSQLDGVIQKLNQDIQAFHSSSRALLRDYQDEYQDRVSAIVTAVQRTRQSAETLLACQAKVVHLEQALQDVSARHQLERQRRKALHNSLVELRGNIRVHCRIRPLLPFDSESDDPVLQSSSISREVAHAVDDETVLVKCDRPGHPLINKTYHFERVYGPAESQSAVFGDVCPLLTSLLDGYNVCVMAYGQTGSGKSYTMLGPHSDDGPVLPLDPQSDLGIIPRAAEELFRLISENPSRSPKVEVSIVEVYNNDIFDLLAKDTVAAVSGVKREVMTAKDGRTEVALLASEAVGSASKLMELVRGGLQLRAKHPTLVHADSSRSHLIITVTLTTAACSDSTADQACSATHPGEQTEAGRAGRSRRTSQGASAPQPVPGDPAGRAEQVQARLQLVDLAGSECIGVSGVTGSALRETACINRSLAALADVLGALSEHRSHIPYRNSRLTHLLQDCLGGDAKLLVILCISPSQRHLAQTLQGLGFGIRARQVQRGPARKRPPSSQMEGKRRPD</sequence>
<protein>
    <recommendedName>
        <fullName evidence="7">Kinesin-like protein KIF25</fullName>
    </recommendedName>
</protein>
<reference key="1">
    <citation type="journal article" date="2005" name="Mol. Biol. Evol.">
        <title>Substitution rate and structural divergence of 5'UTR evolution: comparative analysis between human and cynomolgus monkey cDNAs.</title>
        <authorList>
            <person name="Osada N."/>
            <person name="Hirata M."/>
            <person name="Tanuma R."/>
            <person name="Kusuda J."/>
            <person name="Hida M."/>
            <person name="Suzuki Y."/>
            <person name="Sugano S."/>
            <person name="Gojobori T."/>
            <person name="Shen C.K."/>
            <person name="Wu C.I."/>
            <person name="Hashimoto K."/>
        </authorList>
    </citation>
    <scope>NUCLEOTIDE SEQUENCE [LARGE SCALE MRNA]</scope>
</reference>
<reference key="2">
    <citation type="journal article" date="2017" name="Nat. Cell Biol.">
        <title>The tetrameric kinesin Kif25 suppresses pre-mitotic centrosome separation to establish proper spindle orientation.</title>
        <authorList>
            <person name="Decarreau J."/>
            <person name="Wagenbach M."/>
            <person name="Lynch E."/>
            <person name="Halpern A.R."/>
            <person name="Vaughan J.C."/>
            <person name="Kollman J."/>
            <person name="Wordeman L."/>
        </authorList>
    </citation>
    <scope>FUNCTION</scope>
    <scope>SUBCELLULAR LOCATION</scope>
    <scope>SUBUNIT</scope>
</reference>
<feature type="chain" id="PRO_0000440626" description="Kinesin-like protein KIF25">
    <location>
        <begin position="1"/>
        <end position="586"/>
    </location>
</feature>
<feature type="domain" description="Kinesin motor" evidence="3">
    <location>
        <begin position="173"/>
        <end position="565"/>
    </location>
</feature>
<feature type="region of interest" description="Disordered" evidence="4">
    <location>
        <begin position="417"/>
        <end position="460"/>
    </location>
</feature>
<feature type="region of interest" description="Disordered" evidence="4">
    <location>
        <begin position="564"/>
        <end position="586"/>
    </location>
</feature>
<feature type="coiled-coil region" evidence="2">
    <location>
        <begin position="10"/>
        <end position="94"/>
    </location>
</feature>
<feature type="binding site" evidence="3">
    <location>
        <begin position="267"/>
        <end position="274"/>
    </location>
    <ligand>
        <name>ATP</name>
        <dbReference type="ChEBI" id="CHEBI:30616"/>
    </ligand>
</feature>
<comment type="function">
    <text evidence="1 5">Minus-end microtubule-dependent motor protein (PubMed:28263957). Acts as a negative regulator of centrosome separation required to prevent premature centrosome separation during interphase (By similarity). Required to maintain a centered nucleus to ensure that the spindle is stably oriented at the onset of mitosis (By similarity). May also act as a negative regulator of amino acid starvation-induced autophagy (By similarity).</text>
</comment>
<comment type="subunit">
    <text evidence="5">Homotetramer.</text>
</comment>
<comment type="subcellular location">
    <subcellularLocation>
        <location evidence="5">Cytoplasm</location>
        <location evidence="5">Cytoskeleton</location>
        <location evidence="5">Microtubule organizing center</location>
        <location evidence="5">Centrosome</location>
    </subcellularLocation>
</comment>
<comment type="similarity">
    <text evidence="3">Belongs to the TRAFAC class myosin-kinesin ATPase superfamily. Kinesin family.</text>
</comment>